<protein>
    <recommendedName>
        <fullName evidence="1">DNA-directed RNA polymerase subunit beta'</fullName>
        <shortName evidence="1">RNAP subunit beta'</shortName>
        <ecNumber evidence="1">2.7.7.6</ecNumber>
    </recommendedName>
    <alternativeName>
        <fullName evidence="1">RNA polymerase subunit beta'</fullName>
    </alternativeName>
    <alternativeName>
        <fullName evidence="1">Transcriptase subunit beta'</fullName>
    </alternativeName>
</protein>
<proteinExistence type="evidence at protein level"/>
<dbReference type="EC" id="2.7.7.6" evidence="1"/>
<dbReference type="EMBL" id="AF491331">
    <property type="protein sequence ID" value="AAM74071.1"/>
    <property type="molecule type" value="Genomic_DNA"/>
</dbReference>
<dbReference type="EMBL" id="AE013598">
    <property type="protein sequence ID" value="AAW76844.1"/>
    <property type="molecule type" value="Genomic_DNA"/>
</dbReference>
<dbReference type="PDB" id="2MC6">
    <property type="method" value="NMR"/>
    <property type="chains" value="B=1-10"/>
</dbReference>
<dbReference type="PDBsum" id="2MC6"/>
<dbReference type="SMR" id="Q8KTH8"/>
<dbReference type="STRING" id="291331.XOO3590"/>
<dbReference type="KEGG" id="xoo:XOO3590"/>
<dbReference type="HOGENOM" id="CLU_000524_3_1_6"/>
<dbReference type="EvolutionaryTrace" id="Q8KTH8"/>
<dbReference type="Proteomes" id="UP000006735">
    <property type="component" value="Chromosome"/>
</dbReference>
<dbReference type="GO" id="GO:0000428">
    <property type="term" value="C:DNA-directed RNA polymerase complex"/>
    <property type="evidence" value="ECO:0007669"/>
    <property type="project" value="UniProtKB-KW"/>
</dbReference>
<dbReference type="GO" id="GO:0003677">
    <property type="term" value="F:DNA binding"/>
    <property type="evidence" value="ECO:0007669"/>
    <property type="project" value="UniProtKB-UniRule"/>
</dbReference>
<dbReference type="GO" id="GO:0003899">
    <property type="term" value="F:DNA-directed RNA polymerase activity"/>
    <property type="evidence" value="ECO:0007669"/>
    <property type="project" value="UniProtKB-UniRule"/>
</dbReference>
<dbReference type="GO" id="GO:0000287">
    <property type="term" value="F:magnesium ion binding"/>
    <property type="evidence" value="ECO:0007669"/>
    <property type="project" value="UniProtKB-UniRule"/>
</dbReference>
<dbReference type="GO" id="GO:0008270">
    <property type="term" value="F:zinc ion binding"/>
    <property type="evidence" value="ECO:0007669"/>
    <property type="project" value="UniProtKB-UniRule"/>
</dbReference>
<dbReference type="GO" id="GO:0006351">
    <property type="term" value="P:DNA-templated transcription"/>
    <property type="evidence" value="ECO:0007669"/>
    <property type="project" value="UniProtKB-UniRule"/>
</dbReference>
<dbReference type="CDD" id="cd02655">
    <property type="entry name" value="RNAP_beta'_C"/>
    <property type="match status" value="1"/>
</dbReference>
<dbReference type="CDD" id="cd01609">
    <property type="entry name" value="RNAP_beta'_N"/>
    <property type="match status" value="1"/>
</dbReference>
<dbReference type="FunFam" id="1.10.132.30:FF:000003">
    <property type="entry name" value="DNA-directed RNA polymerase subunit beta"/>
    <property type="match status" value="1"/>
</dbReference>
<dbReference type="FunFam" id="1.10.150.390:FF:000002">
    <property type="entry name" value="DNA-directed RNA polymerase subunit beta"/>
    <property type="match status" value="1"/>
</dbReference>
<dbReference type="Gene3D" id="1.10.132.30">
    <property type="match status" value="1"/>
</dbReference>
<dbReference type="Gene3D" id="1.10.150.390">
    <property type="match status" value="1"/>
</dbReference>
<dbReference type="Gene3D" id="1.10.1790.20">
    <property type="match status" value="1"/>
</dbReference>
<dbReference type="Gene3D" id="1.10.40.90">
    <property type="match status" value="1"/>
</dbReference>
<dbReference type="Gene3D" id="2.40.40.20">
    <property type="match status" value="1"/>
</dbReference>
<dbReference type="Gene3D" id="2.40.50.100">
    <property type="match status" value="3"/>
</dbReference>
<dbReference type="Gene3D" id="4.10.860.120">
    <property type="entry name" value="RNA polymerase II, clamp domain"/>
    <property type="match status" value="1"/>
</dbReference>
<dbReference type="Gene3D" id="1.10.274.100">
    <property type="entry name" value="RNA polymerase Rpb1, domain 3"/>
    <property type="match status" value="1"/>
</dbReference>
<dbReference type="HAMAP" id="MF_01322">
    <property type="entry name" value="RNApol_bact_RpoC"/>
    <property type="match status" value="1"/>
</dbReference>
<dbReference type="InterPro" id="IPR045867">
    <property type="entry name" value="DNA-dir_RpoC_beta_prime"/>
</dbReference>
<dbReference type="InterPro" id="IPR012754">
    <property type="entry name" value="DNA-dir_RpoC_beta_prime_bact"/>
</dbReference>
<dbReference type="InterPro" id="IPR000722">
    <property type="entry name" value="RNA_pol_asu"/>
</dbReference>
<dbReference type="InterPro" id="IPR006592">
    <property type="entry name" value="RNA_pol_N"/>
</dbReference>
<dbReference type="InterPro" id="IPR007080">
    <property type="entry name" value="RNA_pol_Rpb1_1"/>
</dbReference>
<dbReference type="InterPro" id="IPR007066">
    <property type="entry name" value="RNA_pol_Rpb1_3"/>
</dbReference>
<dbReference type="InterPro" id="IPR042102">
    <property type="entry name" value="RNA_pol_Rpb1_3_sf"/>
</dbReference>
<dbReference type="InterPro" id="IPR007083">
    <property type="entry name" value="RNA_pol_Rpb1_4"/>
</dbReference>
<dbReference type="InterPro" id="IPR007081">
    <property type="entry name" value="RNA_pol_Rpb1_5"/>
</dbReference>
<dbReference type="InterPro" id="IPR044893">
    <property type="entry name" value="RNA_pol_Rpb1_clamp_domain"/>
</dbReference>
<dbReference type="InterPro" id="IPR038120">
    <property type="entry name" value="Rpb1_funnel_sf"/>
</dbReference>
<dbReference type="NCBIfam" id="TIGR02386">
    <property type="entry name" value="rpoC_TIGR"/>
    <property type="match status" value="1"/>
</dbReference>
<dbReference type="PANTHER" id="PTHR19376">
    <property type="entry name" value="DNA-DIRECTED RNA POLYMERASE"/>
    <property type="match status" value="1"/>
</dbReference>
<dbReference type="PANTHER" id="PTHR19376:SF54">
    <property type="entry name" value="DNA-DIRECTED RNA POLYMERASE SUBUNIT BETA"/>
    <property type="match status" value="1"/>
</dbReference>
<dbReference type="Pfam" id="PF04997">
    <property type="entry name" value="RNA_pol_Rpb1_1"/>
    <property type="match status" value="1"/>
</dbReference>
<dbReference type="Pfam" id="PF00623">
    <property type="entry name" value="RNA_pol_Rpb1_2"/>
    <property type="match status" value="2"/>
</dbReference>
<dbReference type="Pfam" id="PF04983">
    <property type="entry name" value="RNA_pol_Rpb1_3"/>
    <property type="match status" value="1"/>
</dbReference>
<dbReference type="Pfam" id="PF05000">
    <property type="entry name" value="RNA_pol_Rpb1_4"/>
    <property type="match status" value="1"/>
</dbReference>
<dbReference type="Pfam" id="PF04998">
    <property type="entry name" value="RNA_pol_Rpb1_5"/>
    <property type="match status" value="1"/>
</dbReference>
<dbReference type="SMART" id="SM00663">
    <property type="entry name" value="RPOLA_N"/>
    <property type="match status" value="1"/>
</dbReference>
<dbReference type="SUPFAM" id="SSF64484">
    <property type="entry name" value="beta and beta-prime subunits of DNA dependent RNA-polymerase"/>
    <property type="match status" value="1"/>
</dbReference>
<keyword id="KW-0002">3D-structure</keyword>
<keyword id="KW-0240">DNA-directed RNA polymerase</keyword>
<keyword id="KW-0460">Magnesium</keyword>
<keyword id="KW-0479">Metal-binding</keyword>
<keyword id="KW-0548">Nucleotidyltransferase</keyword>
<keyword id="KW-1185">Reference proteome</keyword>
<keyword id="KW-0804">Transcription</keyword>
<keyword id="KW-0808">Transferase</keyword>
<keyword id="KW-0862">Zinc</keyword>
<evidence type="ECO:0000255" key="1">
    <source>
        <dbReference type="HAMAP-Rule" id="MF_01322"/>
    </source>
</evidence>
<evidence type="ECO:0000256" key="2">
    <source>
        <dbReference type="SAM" id="MobiDB-lite"/>
    </source>
</evidence>
<evidence type="ECO:0000305" key="3"/>
<evidence type="ECO:0007829" key="4">
    <source>
        <dbReference type="PDB" id="2MC6"/>
    </source>
</evidence>
<feature type="chain" id="PRO_0000067836" description="DNA-directed RNA polymerase subunit beta'">
    <location>
        <begin position="1"/>
        <end position="1405"/>
    </location>
</feature>
<feature type="region of interest" description="Disordered" evidence="2">
    <location>
        <begin position="1375"/>
        <end position="1405"/>
    </location>
</feature>
<feature type="binding site" evidence="1">
    <location>
        <position position="70"/>
    </location>
    <ligand>
        <name>Zn(2+)</name>
        <dbReference type="ChEBI" id="CHEBI:29105"/>
        <label>1</label>
    </ligand>
</feature>
<feature type="binding site" evidence="1">
    <location>
        <position position="72"/>
    </location>
    <ligand>
        <name>Zn(2+)</name>
        <dbReference type="ChEBI" id="CHEBI:29105"/>
        <label>1</label>
    </ligand>
</feature>
<feature type="binding site" evidence="1">
    <location>
        <position position="85"/>
    </location>
    <ligand>
        <name>Zn(2+)</name>
        <dbReference type="ChEBI" id="CHEBI:29105"/>
        <label>1</label>
    </ligand>
</feature>
<feature type="binding site" evidence="1">
    <location>
        <position position="88"/>
    </location>
    <ligand>
        <name>Zn(2+)</name>
        <dbReference type="ChEBI" id="CHEBI:29105"/>
        <label>1</label>
    </ligand>
</feature>
<feature type="binding site" evidence="1">
    <location>
        <position position="460"/>
    </location>
    <ligand>
        <name>Mg(2+)</name>
        <dbReference type="ChEBI" id="CHEBI:18420"/>
    </ligand>
</feature>
<feature type="binding site" evidence="1">
    <location>
        <position position="462"/>
    </location>
    <ligand>
        <name>Mg(2+)</name>
        <dbReference type="ChEBI" id="CHEBI:18420"/>
    </ligand>
</feature>
<feature type="binding site" evidence="1">
    <location>
        <position position="464"/>
    </location>
    <ligand>
        <name>Mg(2+)</name>
        <dbReference type="ChEBI" id="CHEBI:18420"/>
    </ligand>
</feature>
<feature type="binding site" evidence="1">
    <location>
        <position position="815"/>
    </location>
    <ligand>
        <name>Zn(2+)</name>
        <dbReference type="ChEBI" id="CHEBI:29105"/>
        <label>2</label>
    </ligand>
</feature>
<feature type="binding site" evidence="1">
    <location>
        <position position="890"/>
    </location>
    <ligand>
        <name>Zn(2+)</name>
        <dbReference type="ChEBI" id="CHEBI:29105"/>
        <label>2</label>
    </ligand>
</feature>
<feature type="binding site" evidence="1">
    <location>
        <position position="897"/>
    </location>
    <ligand>
        <name>Zn(2+)</name>
        <dbReference type="ChEBI" id="CHEBI:29105"/>
        <label>2</label>
    </ligand>
</feature>
<feature type="binding site" evidence="1">
    <location>
        <position position="900"/>
    </location>
    <ligand>
        <name>Zn(2+)</name>
        <dbReference type="ChEBI" id="CHEBI:29105"/>
        <label>2</label>
    </ligand>
</feature>
<feature type="sequence conflict" description="In Ref. 1; AAM74071." evidence="3" ref="1">
    <original>A</original>
    <variation>V</variation>
    <location>
        <position position="631"/>
    </location>
</feature>
<feature type="sequence conflict" description="In Ref. 1; AAM74071." evidence="3" ref="1">
    <original>E</original>
    <variation>D</variation>
    <location>
        <position position="927"/>
    </location>
</feature>
<feature type="sequence conflict" description="In Ref. 1; AAM74071." evidence="3" ref="1">
    <original>N</original>
    <variation>D</variation>
    <location>
        <position position="1277"/>
    </location>
</feature>
<feature type="helix" evidence="4">
    <location>
        <begin position="5"/>
        <end position="9"/>
    </location>
</feature>
<reference key="1">
    <citation type="journal article" date="2002" name="J. Mol. Biol.">
        <title>A novel bacteriophage-encoded RNA polymerase binding protein inhibits transcription initiation and abolishes transcription termination by host RNA polymerase.</title>
        <authorList>
            <person name="Nechaev S."/>
            <person name="Yuzenkova Y."/>
            <person name="Niedziela-Majka A."/>
            <person name="Heyduk T."/>
            <person name="Severinov K."/>
        </authorList>
    </citation>
    <scope>NUCLEOTIDE SEQUENCE [GENOMIC DNA]</scope>
    <source>
        <strain>XO604</strain>
    </source>
</reference>
<reference key="2">
    <citation type="journal article" date="2005" name="Nucleic Acids Res.">
        <title>The genome sequence of Xanthomonas oryzae pathovar oryzae KACC10331, the bacterial blight pathogen of rice.</title>
        <authorList>
            <person name="Lee B.-M."/>
            <person name="Park Y.-J."/>
            <person name="Park D.-S."/>
            <person name="Kang H.-W."/>
            <person name="Kim J.-G."/>
            <person name="Song E.-S."/>
            <person name="Park I.-C."/>
            <person name="Yoon U.-H."/>
            <person name="Hahn J.-H."/>
            <person name="Koo B.-S."/>
            <person name="Lee G.-B."/>
            <person name="Kim H."/>
            <person name="Park H.-S."/>
            <person name="Yoon K.-O."/>
            <person name="Kim J.-H."/>
            <person name="Jung C.-H."/>
            <person name="Koh N.-H."/>
            <person name="Seo J.-S."/>
            <person name="Go S.-J."/>
        </authorList>
    </citation>
    <scope>NUCLEOTIDE SEQUENCE [LARGE SCALE GENOMIC DNA]</scope>
    <source>
        <strain>KACC10331 / KXO85</strain>
    </source>
</reference>
<organism>
    <name type="scientific">Xanthomonas oryzae pv. oryzae (strain KACC10331 / KXO85)</name>
    <dbReference type="NCBI Taxonomy" id="291331"/>
    <lineage>
        <taxon>Bacteria</taxon>
        <taxon>Pseudomonadati</taxon>
        <taxon>Pseudomonadota</taxon>
        <taxon>Gammaproteobacteria</taxon>
        <taxon>Lysobacterales</taxon>
        <taxon>Lysobacteraceae</taxon>
        <taxon>Xanthomonas</taxon>
    </lineage>
</organism>
<accession>Q8KTH8</accession>
<accession>Q5GWS7</accession>
<comment type="function">
    <text evidence="1">DNA-dependent RNA polymerase catalyzes the transcription of DNA into RNA using the four ribonucleoside triphosphates as substrates.</text>
</comment>
<comment type="catalytic activity">
    <reaction evidence="1">
        <text>RNA(n) + a ribonucleoside 5'-triphosphate = RNA(n+1) + diphosphate</text>
        <dbReference type="Rhea" id="RHEA:21248"/>
        <dbReference type="Rhea" id="RHEA-COMP:14527"/>
        <dbReference type="Rhea" id="RHEA-COMP:17342"/>
        <dbReference type="ChEBI" id="CHEBI:33019"/>
        <dbReference type="ChEBI" id="CHEBI:61557"/>
        <dbReference type="ChEBI" id="CHEBI:140395"/>
        <dbReference type="EC" id="2.7.7.6"/>
    </reaction>
</comment>
<comment type="cofactor">
    <cofactor evidence="1">
        <name>Mg(2+)</name>
        <dbReference type="ChEBI" id="CHEBI:18420"/>
    </cofactor>
    <text evidence="1">Binds 1 Mg(2+) ion per subunit.</text>
</comment>
<comment type="cofactor">
    <cofactor evidence="1">
        <name>Zn(2+)</name>
        <dbReference type="ChEBI" id="CHEBI:29105"/>
    </cofactor>
    <text evidence="1">Binds 2 Zn(2+) ions per subunit.</text>
</comment>
<comment type="subunit">
    <text evidence="1">The RNAP catalytic core consists of 2 alpha, 1 beta, 1 beta' and 1 omega subunit. When a sigma factor is associated with the core the holoenzyme is formed, which can initiate transcription.</text>
</comment>
<comment type="similarity">
    <text evidence="1">Belongs to the RNA polymerase beta' chain family.</text>
</comment>
<sequence length="1405" mass="155232">MKDLLNLFNQQRQTLDFDAIKIALASPDLIRSWSYGEVKKPETINYRTFKPERDGLFCAAIFGPIKDYECLCGKYKRMKHRGVVCEKCGTEVTLAKVRRERMGHIDLASPVAHIWFLKSLPSRIGLMLDMTLRDIERVLYFEAYVVTEPGLTPLERRQLLTEEQYLTARQEYNDDFDAAMGAEAVYELLRTIDLQSEMTRLREEIASTGSETKLKRLTKRIKLIEAFLESGNRPEWMVMTVLPVLPPDLRPLVPLDGGRFATSDLNDLYRRVINRNNRLRRLLELNAPDIIVRNEKRMLQESVDALLDNGRRGRAITGTNKRPLKSLADMIKGKQGRFRQNLLGKRVDYSGRSVITVGPYLKLHQCGLPKKMALELFKPFVFAKLQRRGLATTIKAAKKLVEREEAEVWDILEEVIREHPVLLNRAPTLHRLGIQAFEPVLIEGKAIQLHPLVCTAFNADFDGDQMAVHVPLSLEAQLEARALMMSTNNILSPANGEPIIVPSQDVVLGLYYMSRALENKKGEGMVFANTSEVKRAYDNRVVELHAKVKVRITQVDVDAVDGKRTSGTSIVDTTVGRALLSEILPEGLPFQLANTEMTKKNISRLINSSYRLLGLKDTVVFADKLMYTGYAYATRAGVSIGIDDMLIPDEKKGILTEAEAEVLEIQEQYQSGLVTAGERYNKVVDIWSRTSERIAKAMMDTIGTEKVENAKGETIDQKSMNSLYIMADSGARGSQAQIRQLAGMRGLMARPDGSIIETPIKANFREGLNVQEYFNSTHGARKGLADTALKTANSGYLTRRLVDVAQDVVITEIDCGTTEGLIMTPIVEGGDVVEPLKERVLGRVVAEDVYLPGNDEEPIVTRNTLLDEAWVAKLEDASVQSVKVRSTISCESSFGVCARCYGRDLARGHQVNIGEAVGVIAAQSIGEPGTQLTMRTFHIGGAASRAAAVDNITVKTTGSVKFNNLKSVAHASGSLVAVSRSGELSVLDGHGRERERYKLPYGATITAKDGDAVKAGQSVANWDPHNHPIVSEVAGFIRFIDFVDGVTVIEKTDELTGLASREITDPKRRGAHAKELRPIVRIVDGKGNDLTIPNTDLPAQYLLPPRSIVNLQDGAAVGVGDVVAKIPQEASKTRDITGGLPRVADLFEARKPKDPAILAERSGIISFGKDTKGKQRLIIKDTDGSEHEELIPKYRQIIVFEGEHVTKGETVVDGEPSPQDILRLLGVEPLAAYLVKEIQDVYRLQGVKINDKHIEVITRQMLRKVEIVDQGNSKFLNGEQVERQRVIEENARLVKRNELPAKYDPVLLGITKASLATESFISAASFQETTRVLTEAAVRGTRDNLRGLKENVIVGRLIPAGTGLAYHAGRRKASGLTDSEMETLSGKPAGAEPVAALADAGADEE</sequence>
<name>RPOC_XANOR</name>
<gene>
    <name evidence="1" type="primary">rpoC</name>
    <name type="ordered locus">XOO3590</name>
</gene>